<comment type="catalytic activity">
    <reaction evidence="1">
        <text>(R)-pantothenate + ATP = (R)-4'-phosphopantothenate + ADP + H(+)</text>
        <dbReference type="Rhea" id="RHEA:16373"/>
        <dbReference type="ChEBI" id="CHEBI:10986"/>
        <dbReference type="ChEBI" id="CHEBI:15378"/>
        <dbReference type="ChEBI" id="CHEBI:29032"/>
        <dbReference type="ChEBI" id="CHEBI:30616"/>
        <dbReference type="ChEBI" id="CHEBI:456216"/>
        <dbReference type="EC" id="2.7.1.33"/>
    </reaction>
</comment>
<comment type="pathway">
    <text evidence="1">Cofactor biosynthesis; coenzyme A biosynthesis; CoA from (R)-pantothenate: step 1/5.</text>
</comment>
<comment type="subcellular location">
    <subcellularLocation>
        <location evidence="1">Cytoplasm</location>
    </subcellularLocation>
</comment>
<comment type="similarity">
    <text evidence="1">Belongs to the prokaryotic pantothenate kinase family.</text>
</comment>
<dbReference type="EC" id="2.7.1.33" evidence="1"/>
<dbReference type="EMBL" id="AE009948">
    <property type="protein sequence ID" value="AAM99835.1"/>
    <property type="molecule type" value="Genomic_DNA"/>
</dbReference>
<dbReference type="RefSeq" id="NP_687963.1">
    <property type="nucleotide sequence ID" value="NC_004116.1"/>
</dbReference>
<dbReference type="RefSeq" id="WP_001058331.1">
    <property type="nucleotide sequence ID" value="NC_004116.1"/>
</dbReference>
<dbReference type="SMR" id="P63813"/>
<dbReference type="STRING" id="208435.SAG0951"/>
<dbReference type="GeneID" id="66885873"/>
<dbReference type="KEGG" id="sag:SAG0951"/>
<dbReference type="PATRIC" id="fig|208435.3.peg.957"/>
<dbReference type="HOGENOM" id="CLU_053818_1_1_9"/>
<dbReference type="OrthoDB" id="1550976at2"/>
<dbReference type="UniPathway" id="UPA00241">
    <property type="reaction ID" value="UER00352"/>
</dbReference>
<dbReference type="Proteomes" id="UP000000821">
    <property type="component" value="Chromosome"/>
</dbReference>
<dbReference type="GO" id="GO:0005737">
    <property type="term" value="C:cytoplasm"/>
    <property type="evidence" value="ECO:0007669"/>
    <property type="project" value="UniProtKB-SubCell"/>
</dbReference>
<dbReference type="GO" id="GO:0005524">
    <property type="term" value="F:ATP binding"/>
    <property type="evidence" value="ECO:0007669"/>
    <property type="project" value="UniProtKB-UniRule"/>
</dbReference>
<dbReference type="GO" id="GO:0004594">
    <property type="term" value="F:pantothenate kinase activity"/>
    <property type="evidence" value="ECO:0007669"/>
    <property type="project" value="UniProtKB-UniRule"/>
</dbReference>
<dbReference type="GO" id="GO:0015937">
    <property type="term" value="P:coenzyme A biosynthetic process"/>
    <property type="evidence" value="ECO:0007669"/>
    <property type="project" value="UniProtKB-UniRule"/>
</dbReference>
<dbReference type="CDD" id="cd02025">
    <property type="entry name" value="PanK"/>
    <property type="match status" value="1"/>
</dbReference>
<dbReference type="Gene3D" id="3.40.50.300">
    <property type="entry name" value="P-loop containing nucleotide triphosphate hydrolases"/>
    <property type="match status" value="1"/>
</dbReference>
<dbReference type="HAMAP" id="MF_00215">
    <property type="entry name" value="Pantothen_kinase_1"/>
    <property type="match status" value="1"/>
</dbReference>
<dbReference type="InterPro" id="IPR027417">
    <property type="entry name" value="P-loop_NTPase"/>
</dbReference>
<dbReference type="InterPro" id="IPR004566">
    <property type="entry name" value="PanK"/>
</dbReference>
<dbReference type="InterPro" id="IPR006083">
    <property type="entry name" value="PRK/URK"/>
</dbReference>
<dbReference type="NCBIfam" id="TIGR00554">
    <property type="entry name" value="panK_bact"/>
    <property type="match status" value="1"/>
</dbReference>
<dbReference type="PANTHER" id="PTHR10285">
    <property type="entry name" value="URIDINE KINASE"/>
    <property type="match status" value="1"/>
</dbReference>
<dbReference type="Pfam" id="PF00485">
    <property type="entry name" value="PRK"/>
    <property type="match status" value="1"/>
</dbReference>
<dbReference type="PIRSF" id="PIRSF000545">
    <property type="entry name" value="Pantothenate_kin"/>
    <property type="match status" value="1"/>
</dbReference>
<dbReference type="SUPFAM" id="SSF52540">
    <property type="entry name" value="P-loop containing nucleoside triphosphate hydrolases"/>
    <property type="match status" value="1"/>
</dbReference>
<organism>
    <name type="scientific">Streptococcus agalactiae serotype V (strain ATCC BAA-611 / 2603 V/R)</name>
    <dbReference type="NCBI Taxonomy" id="208435"/>
    <lineage>
        <taxon>Bacteria</taxon>
        <taxon>Bacillati</taxon>
        <taxon>Bacillota</taxon>
        <taxon>Bacilli</taxon>
        <taxon>Lactobacillales</taxon>
        <taxon>Streptococcaceae</taxon>
        <taxon>Streptococcus</taxon>
    </lineage>
</organism>
<proteinExistence type="inferred from homology"/>
<accession>P63813</accession>
<accession>Q8DZZ1</accession>
<accession>Q8E5P2</accession>
<gene>
    <name evidence="1" type="primary">coaA</name>
    <name type="ordered locus">SAG0951</name>
</gene>
<keyword id="KW-0067">ATP-binding</keyword>
<keyword id="KW-0173">Coenzyme A biosynthesis</keyword>
<keyword id="KW-0963">Cytoplasm</keyword>
<keyword id="KW-0418">Kinase</keyword>
<keyword id="KW-0547">Nucleotide-binding</keyword>
<keyword id="KW-1185">Reference proteome</keyword>
<keyword id="KW-0808">Transferase</keyword>
<evidence type="ECO:0000255" key="1">
    <source>
        <dbReference type="HAMAP-Rule" id="MF_00215"/>
    </source>
</evidence>
<sequence length="306" mass="36093">MNNEFINFDRISRENWKDLHQQSQALLTEKELESIKSLNDNINIQDVIDIYLPLINLIQIYKRSQENLSFSKAIFLKKENYQRPFIIGISGSVAVGKSTTSRLLQLLISRTFKDSHVELVTTDGFLYPNEKLIQNGILNRKGFPESYDMESLLNFLDTIKNGITAKIPIYSHEIYDIVPNQLQTIETPDFLILEGINVFQNQQNHRLYMNDYFDFSIYIDAENKQIEEWYLQRFNSLLQLAEADPSNYYHKFTQIPPHKAMELAKDIWKTINLVNLEKYIEPTRNRADFIIHKGKHHKIDEIYLKK</sequence>
<protein>
    <recommendedName>
        <fullName evidence="1">Pantothenate kinase</fullName>
        <ecNumber evidence="1">2.7.1.33</ecNumber>
    </recommendedName>
    <alternativeName>
        <fullName evidence="1">Pantothenic acid kinase</fullName>
    </alternativeName>
</protein>
<reference key="1">
    <citation type="journal article" date="2002" name="Proc. Natl. Acad. Sci. U.S.A.">
        <title>Complete genome sequence and comparative genomic analysis of an emerging human pathogen, serotype V Streptococcus agalactiae.</title>
        <authorList>
            <person name="Tettelin H."/>
            <person name="Masignani V."/>
            <person name="Cieslewicz M.J."/>
            <person name="Eisen J.A."/>
            <person name="Peterson S.N."/>
            <person name="Wessels M.R."/>
            <person name="Paulsen I.T."/>
            <person name="Nelson K.E."/>
            <person name="Margarit I."/>
            <person name="Read T.D."/>
            <person name="Madoff L.C."/>
            <person name="Wolf A.M."/>
            <person name="Beanan M.J."/>
            <person name="Brinkac L.M."/>
            <person name="Daugherty S.C."/>
            <person name="DeBoy R.T."/>
            <person name="Durkin A.S."/>
            <person name="Kolonay J.F."/>
            <person name="Madupu R."/>
            <person name="Lewis M.R."/>
            <person name="Radune D."/>
            <person name="Fedorova N.B."/>
            <person name="Scanlan D."/>
            <person name="Khouri H.M."/>
            <person name="Mulligan S."/>
            <person name="Carty H.A."/>
            <person name="Cline R.T."/>
            <person name="Van Aken S.E."/>
            <person name="Gill J."/>
            <person name="Scarselli M."/>
            <person name="Mora M."/>
            <person name="Iacobini E.T."/>
            <person name="Brettoni C."/>
            <person name="Galli G."/>
            <person name="Mariani M."/>
            <person name="Vegni F."/>
            <person name="Maione D."/>
            <person name="Rinaudo D."/>
            <person name="Rappuoli R."/>
            <person name="Telford J.L."/>
            <person name="Kasper D.L."/>
            <person name="Grandi G."/>
            <person name="Fraser C.M."/>
        </authorList>
    </citation>
    <scope>NUCLEOTIDE SEQUENCE [LARGE SCALE GENOMIC DNA]</scope>
    <source>
        <strain>ATCC BAA-611 / 2603 V/R</strain>
    </source>
</reference>
<name>COAA_STRA5</name>
<feature type="chain" id="PRO_0000194450" description="Pantothenate kinase">
    <location>
        <begin position="1"/>
        <end position="306"/>
    </location>
</feature>
<feature type="binding site" evidence="1">
    <location>
        <begin position="91"/>
        <end position="98"/>
    </location>
    <ligand>
        <name>ATP</name>
        <dbReference type="ChEBI" id="CHEBI:30616"/>
    </ligand>
</feature>